<evidence type="ECO:0000255" key="1">
    <source>
        <dbReference type="HAMAP-Rule" id="MF_01013"/>
    </source>
</evidence>
<name>HIS6_RHOPB</name>
<protein>
    <recommendedName>
        <fullName evidence="1">Imidazole glycerol phosphate synthase subunit HisF</fullName>
        <ecNumber evidence="1">4.3.2.10</ecNumber>
    </recommendedName>
    <alternativeName>
        <fullName evidence="1">IGP synthase cyclase subunit</fullName>
    </alternativeName>
    <alternativeName>
        <fullName evidence="1">IGP synthase subunit HisF</fullName>
    </alternativeName>
    <alternativeName>
        <fullName evidence="1">ImGP synthase subunit HisF</fullName>
        <shortName evidence="1">IGPS subunit HisF</shortName>
    </alternativeName>
</protein>
<keyword id="KW-0028">Amino-acid biosynthesis</keyword>
<keyword id="KW-0963">Cytoplasm</keyword>
<keyword id="KW-0368">Histidine biosynthesis</keyword>
<keyword id="KW-0456">Lyase</keyword>
<proteinExistence type="inferred from homology"/>
<gene>
    <name evidence="1" type="primary">hisF</name>
    <name type="ordered locus">RPC_0310</name>
</gene>
<dbReference type="EC" id="4.3.2.10" evidence="1"/>
<dbReference type="EMBL" id="CP000301">
    <property type="protein sequence ID" value="ABD85885.1"/>
    <property type="molecule type" value="Genomic_DNA"/>
</dbReference>
<dbReference type="SMR" id="Q21CK1"/>
<dbReference type="STRING" id="316056.RPC_0310"/>
<dbReference type="KEGG" id="rpc:RPC_0310"/>
<dbReference type="eggNOG" id="COG0107">
    <property type="taxonomic scope" value="Bacteria"/>
</dbReference>
<dbReference type="HOGENOM" id="CLU_048577_4_0_5"/>
<dbReference type="OrthoDB" id="9781903at2"/>
<dbReference type="UniPathway" id="UPA00031">
    <property type="reaction ID" value="UER00010"/>
</dbReference>
<dbReference type="GO" id="GO:0005737">
    <property type="term" value="C:cytoplasm"/>
    <property type="evidence" value="ECO:0007669"/>
    <property type="project" value="UniProtKB-SubCell"/>
</dbReference>
<dbReference type="GO" id="GO:0000107">
    <property type="term" value="F:imidazoleglycerol-phosphate synthase activity"/>
    <property type="evidence" value="ECO:0007669"/>
    <property type="project" value="UniProtKB-UniRule"/>
</dbReference>
<dbReference type="GO" id="GO:0016829">
    <property type="term" value="F:lyase activity"/>
    <property type="evidence" value="ECO:0007669"/>
    <property type="project" value="UniProtKB-KW"/>
</dbReference>
<dbReference type="GO" id="GO:0000105">
    <property type="term" value="P:L-histidine biosynthetic process"/>
    <property type="evidence" value="ECO:0007669"/>
    <property type="project" value="UniProtKB-UniRule"/>
</dbReference>
<dbReference type="CDD" id="cd04731">
    <property type="entry name" value="HisF"/>
    <property type="match status" value="1"/>
</dbReference>
<dbReference type="FunFam" id="3.20.20.70:FF:000006">
    <property type="entry name" value="Imidazole glycerol phosphate synthase subunit HisF"/>
    <property type="match status" value="1"/>
</dbReference>
<dbReference type="Gene3D" id="3.20.20.70">
    <property type="entry name" value="Aldolase class I"/>
    <property type="match status" value="1"/>
</dbReference>
<dbReference type="HAMAP" id="MF_01013">
    <property type="entry name" value="HisF"/>
    <property type="match status" value="1"/>
</dbReference>
<dbReference type="InterPro" id="IPR013785">
    <property type="entry name" value="Aldolase_TIM"/>
</dbReference>
<dbReference type="InterPro" id="IPR006062">
    <property type="entry name" value="His_biosynth"/>
</dbReference>
<dbReference type="InterPro" id="IPR004651">
    <property type="entry name" value="HisF"/>
</dbReference>
<dbReference type="InterPro" id="IPR050064">
    <property type="entry name" value="IGPS_HisA/HisF"/>
</dbReference>
<dbReference type="InterPro" id="IPR011060">
    <property type="entry name" value="RibuloseP-bd_barrel"/>
</dbReference>
<dbReference type="NCBIfam" id="TIGR00735">
    <property type="entry name" value="hisF"/>
    <property type="match status" value="1"/>
</dbReference>
<dbReference type="PANTHER" id="PTHR21235:SF2">
    <property type="entry name" value="IMIDAZOLE GLYCEROL PHOSPHATE SYNTHASE HISHF"/>
    <property type="match status" value="1"/>
</dbReference>
<dbReference type="PANTHER" id="PTHR21235">
    <property type="entry name" value="IMIDAZOLE GLYCEROL PHOSPHATE SYNTHASE SUBUNIT HISF/H IGP SYNTHASE SUBUNIT HISF/H"/>
    <property type="match status" value="1"/>
</dbReference>
<dbReference type="Pfam" id="PF00977">
    <property type="entry name" value="His_biosynth"/>
    <property type="match status" value="1"/>
</dbReference>
<dbReference type="SUPFAM" id="SSF51366">
    <property type="entry name" value="Ribulose-phoshate binding barrel"/>
    <property type="match status" value="1"/>
</dbReference>
<reference key="1">
    <citation type="submission" date="2006-03" db="EMBL/GenBank/DDBJ databases">
        <title>Complete sequence of Rhodopseudomonas palustris BisB18.</title>
        <authorList>
            <consortium name="US DOE Joint Genome Institute"/>
            <person name="Copeland A."/>
            <person name="Lucas S."/>
            <person name="Lapidus A."/>
            <person name="Barry K."/>
            <person name="Detter J.C."/>
            <person name="Glavina del Rio T."/>
            <person name="Hammon N."/>
            <person name="Israni S."/>
            <person name="Dalin E."/>
            <person name="Tice H."/>
            <person name="Pitluck S."/>
            <person name="Chain P."/>
            <person name="Malfatti S."/>
            <person name="Shin M."/>
            <person name="Vergez L."/>
            <person name="Schmutz J."/>
            <person name="Larimer F."/>
            <person name="Land M."/>
            <person name="Hauser L."/>
            <person name="Pelletier D.A."/>
            <person name="Kyrpides N."/>
            <person name="Anderson I."/>
            <person name="Oda Y."/>
            <person name="Harwood C.S."/>
            <person name="Richardson P."/>
        </authorList>
    </citation>
    <scope>NUCLEOTIDE SEQUENCE [LARGE SCALE GENOMIC DNA]</scope>
    <source>
        <strain>BisB18</strain>
    </source>
</reference>
<comment type="function">
    <text evidence="1">IGPS catalyzes the conversion of PRFAR and glutamine to IGP, AICAR and glutamate. The HisF subunit catalyzes the cyclization activity that produces IGP and AICAR from PRFAR using the ammonia provided by the HisH subunit.</text>
</comment>
<comment type="catalytic activity">
    <reaction evidence="1">
        <text>5-[(5-phospho-1-deoxy-D-ribulos-1-ylimino)methylamino]-1-(5-phospho-beta-D-ribosyl)imidazole-4-carboxamide + L-glutamine = D-erythro-1-(imidazol-4-yl)glycerol 3-phosphate + 5-amino-1-(5-phospho-beta-D-ribosyl)imidazole-4-carboxamide + L-glutamate + H(+)</text>
        <dbReference type="Rhea" id="RHEA:24793"/>
        <dbReference type="ChEBI" id="CHEBI:15378"/>
        <dbReference type="ChEBI" id="CHEBI:29985"/>
        <dbReference type="ChEBI" id="CHEBI:58278"/>
        <dbReference type="ChEBI" id="CHEBI:58359"/>
        <dbReference type="ChEBI" id="CHEBI:58475"/>
        <dbReference type="ChEBI" id="CHEBI:58525"/>
        <dbReference type="EC" id="4.3.2.10"/>
    </reaction>
</comment>
<comment type="pathway">
    <text evidence="1">Amino-acid biosynthesis; L-histidine biosynthesis; L-histidine from 5-phospho-alpha-D-ribose 1-diphosphate: step 5/9.</text>
</comment>
<comment type="subunit">
    <text evidence="1">Heterodimer of HisH and HisF.</text>
</comment>
<comment type="subcellular location">
    <subcellularLocation>
        <location evidence="1">Cytoplasm</location>
    </subcellularLocation>
</comment>
<comment type="similarity">
    <text evidence="1">Belongs to the HisA/HisF family.</text>
</comment>
<accession>Q21CK1</accession>
<sequence>MFKVRVIPCLDVKDGRVVKGINFVDLRDAGDPVEAAIAYDAAGADELCFLDITATHENRGIMLDVVRRTAEACFMPLTVGGGVRTVDDIKVLLRSGADKVSINSAAVSRREFVKEAAEKFGDQCIVVAIDAKRVKRGGGGERWEIFTHGGRNSTGIDAIEYAQEVVSLGAGEILLTSMDRDGTRQGFDIPLTSAIADSVHVPVIASGGVGTLDHLVDGIRNGHATAVLAASIFHFGEFTIRQAKDHMVRAGLPMRLDP</sequence>
<feature type="chain" id="PRO_1000063130" description="Imidazole glycerol phosphate synthase subunit HisF">
    <location>
        <begin position="1"/>
        <end position="258"/>
    </location>
</feature>
<feature type="active site" evidence="1">
    <location>
        <position position="11"/>
    </location>
</feature>
<feature type="active site" evidence="1">
    <location>
        <position position="130"/>
    </location>
</feature>
<organism>
    <name type="scientific">Rhodopseudomonas palustris (strain BisB18)</name>
    <dbReference type="NCBI Taxonomy" id="316056"/>
    <lineage>
        <taxon>Bacteria</taxon>
        <taxon>Pseudomonadati</taxon>
        <taxon>Pseudomonadota</taxon>
        <taxon>Alphaproteobacteria</taxon>
        <taxon>Hyphomicrobiales</taxon>
        <taxon>Nitrobacteraceae</taxon>
        <taxon>Rhodopseudomonas</taxon>
    </lineage>
</organism>